<organism>
    <name type="scientific">Bacillus cereus (strain Q1)</name>
    <dbReference type="NCBI Taxonomy" id="361100"/>
    <lineage>
        <taxon>Bacteria</taxon>
        <taxon>Bacillati</taxon>
        <taxon>Bacillota</taxon>
        <taxon>Bacilli</taxon>
        <taxon>Bacillales</taxon>
        <taxon>Bacillaceae</taxon>
        <taxon>Bacillus</taxon>
        <taxon>Bacillus cereus group</taxon>
    </lineage>
</organism>
<evidence type="ECO:0000255" key="1">
    <source>
        <dbReference type="HAMAP-Rule" id="MF_01861"/>
    </source>
</evidence>
<dbReference type="EMBL" id="CP000227">
    <property type="protein sequence ID" value="ACM11694.1"/>
    <property type="molecule type" value="Genomic_DNA"/>
</dbReference>
<dbReference type="KEGG" id="bcq:BCQ_1264"/>
<dbReference type="HOGENOM" id="CLU_142282_0_0_9"/>
<dbReference type="Proteomes" id="UP000000441">
    <property type="component" value="Chromosome"/>
</dbReference>
<dbReference type="HAMAP" id="MF_01861">
    <property type="entry name" value="UPF0738"/>
    <property type="match status" value="1"/>
</dbReference>
<dbReference type="InterPro" id="IPR020908">
    <property type="entry name" value="UPF0738"/>
</dbReference>
<dbReference type="Pfam" id="PF19785">
    <property type="entry name" value="UPF0738"/>
    <property type="match status" value="1"/>
</dbReference>
<sequence length="123" mass="14203">MQNKIQVKSVEKRENALIFCAENSEIEVKELSARNHVLVDSDNLSFLYILENESSFIYVSIPHTCWEAMHEAMNNDVVMFVRVNDIEMELEGLKEEVEYLVENIEGNANYGEELVTAVEKVFL</sequence>
<comment type="similarity">
    <text evidence="1">Belongs to the UPF0738 family.</text>
</comment>
<protein>
    <recommendedName>
        <fullName evidence="1">UPF0738 protein BCQ_1264</fullName>
    </recommendedName>
</protein>
<proteinExistence type="inferred from homology"/>
<gene>
    <name type="ordered locus">BCQ_1264</name>
</gene>
<name>Y1264_BACCQ</name>
<feature type="chain" id="PRO_1000188709" description="UPF0738 protein BCQ_1264">
    <location>
        <begin position="1"/>
        <end position="123"/>
    </location>
</feature>
<reference key="1">
    <citation type="journal article" date="2009" name="J. Bacteriol.">
        <title>Complete genome sequence of the extremophilic Bacillus cereus strain Q1 with industrial applications.</title>
        <authorList>
            <person name="Xiong Z."/>
            <person name="Jiang Y."/>
            <person name="Qi D."/>
            <person name="Lu H."/>
            <person name="Yang F."/>
            <person name="Yang J."/>
            <person name="Chen L."/>
            <person name="Sun L."/>
            <person name="Xu X."/>
            <person name="Xue Y."/>
            <person name="Zhu Y."/>
            <person name="Jin Q."/>
        </authorList>
    </citation>
    <scope>NUCLEOTIDE SEQUENCE [LARGE SCALE GENOMIC DNA]</scope>
    <source>
        <strain>Q1</strain>
    </source>
</reference>
<accession>B9ITZ8</accession>